<organism>
    <name type="scientific">Meyerozyma guilliermondii (strain ATCC 6260 / CBS 566 / DSM 6381 / JCM 1539 / NBRC 10279 / NRRL Y-324)</name>
    <name type="common">Yeast</name>
    <name type="synonym">Candida guilliermondii</name>
    <dbReference type="NCBI Taxonomy" id="294746"/>
    <lineage>
        <taxon>Eukaryota</taxon>
        <taxon>Fungi</taxon>
        <taxon>Dikarya</taxon>
        <taxon>Ascomycota</taxon>
        <taxon>Saccharomycotina</taxon>
        <taxon>Pichiomycetes</taxon>
        <taxon>Debaryomycetaceae</taxon>
        <taxon>Meyerozyma</taxon>
    </lineage>
</organism>
<feature type="chain" id="PRO_0000351014" description="ATP-dependent DNA helicase CHL1">
    <location>
        <begin position="1"/>
        <end position="825"/>
    </location>
</feature>
<feature type="domain" description="Helicase ATP-binding" evidence="4">
    <location>
        <begin position="6"/>
        <end position="415"/>
    </location>
</feature>
<feature type="region of interest" description="Disordered" evidence="5">
    <location>
        <begin position="67"/>
        <end position="100"/>
    </location>
</feature>
<feature type="region of interest" description="Disordered" evidence="5">
    <location>
        <begin position="121"/>
        <end position="166"/>
    </location>
</feature>
<feature type="short sequence motif" description="DEAH box">
    <location>
        <begin position="359"/>
        <end position="362"/>
    </location>
</feature>
<feature type="compositionally biased region" description="Polar residues" evidence="5">
    <location>
        <begin position="69"/>
        <end position="86"/>
    </location>
</feature>
<feature type="compositionally biased region" description="Acidic residues" evidence="5">
    <location>
        <begin position="147"/>
        <end position="157"/>
    </location>
</feature>
<feature type="binding site" evidence="4">
    <location>
        <begin position="42"/>
        <end position="49"/>
    </location>
    <ligand>
        <name>ATP</name>
        <dbReference type="ChEBI" id="CHEBI:30616"/>
    </ligand>
</feature>
<feature type="binding site" evidence="1">
    <location>
        <position position="245"/>
    </location>
    <ligand>
        <name>[4Fe-4S] cluster</name>
        <dbReference type="ChEBI" id="CHEBI:49883"/>
    </ligand>
</feature>
<feature type="binding site" evidence="1">
    <location>
        <position position="263"/>
    </location>
    <ligand>
        <name>[4Fe-4S] cluster</name>
        <dbReference type="ChEBI" id="CHEBI:49883"/>
    </ligand>
</feature>
<feature type="binding site" evidence="1">
    <location>
        <position position="274"/>
    </location>
    <ligand>
        <name>[4Fe-4S] cluster</name>
        <dbReference type="ChEBI" id="CHEBI:49883"/>
    </ligand>
</feature>
<feature type="binding site" evidence="1">
    <location>
        <position position="316"/>
    </location>
    <ligand>
        <name>[4Fe-4S] cluster</name>
        <dbReference type="ChEBI" id="CHEBI:49883"/>
    </ligand>
</feature>
<proteinExistence type="inferred from homology"/>
<evidence type="ECO:0000250" key="1">
    <source>
        <dbReference type="UniProtKB" id="P18074"/>
    </source>
</evidence>
<evidence type="ECO:0000250" key="2">
    <source>
        <dbReference type="UniProtKB" id="P22516"/>
    </source>
</evidence>
<evidence type="ECO:0000250" key="3">
    <source>
        <dbReference type="UniProtKB" id="Q96FC9"/>
    </source>
</evidence>
<evidence type="ECO:0000255" key="4">
    <source>
        <dbReference type="PROSITE-ProRule" id="PRU00541"/>
    </source>
</evidence>
<evidence type="ECO:0000256" key="5">
    <source>
        <dbReference type="SAM" id="MobiDB-lite"/>
    </source>
</evidence>
<evidence type="ECO:0000305" key="6"/>
<sequence>MNRDDPRLTYNHPYKPYDIQVQLMDAIYDTIQNKYKVGLFESPTGTGKTLSIICSSMTWLRNYKKTQDHSTMGSNSSNDNDPNQTSDSDEEPDWVKEAHIKNIRSRTSGLAIDYERHLEELSQTPHAGHTVELGQRTHKRKKRATNDDDFLPDDYNSDTDSNSVETKNAKLQQEINQIMKRVDGSDGKTPGFVNTCPVTIFFSSRTHSQLSQFAHQLSITSFESSLGEIAERIKFMPLSSRKQLCIHPKVSSLSSVSAVNDACVELQQKSDKRCEFMPRVNNPESDQLVQRFADYSFAVIKDIEELHELGADLKVCPYYASRRNIENSEIIALPYQMLLQQATRKSLGLSIKDSIVIIDEAHNLLDVISSINSVSITRKELSSVIASLKLYYNKFTKRLNSGNRIHLMKLIKLCSLVETYIKNCEIQNKCVPGSDVLIDELFQGSTGDLLNIHRIEKYLDKSKIAYKIQTYIEQSREESDEKQASSPLLFKVTAFLKSLVNPSKEGRFFWDKINDDTEIKYLLLDPSEMFRDVVESARCVLLCGGTMEPVEDYYRYLFPYVPGEKIKKFTCGHIVPQENIEVLTVSSRKTTVFDFSYHKRNDPSMLRELALSLQDICERVPNGIIVFAPSYKYLNQLISTWRKDGNLAKISTLKQVFLESSDSTSIESILRDYGAAARGSGAILFSVVGGKMSEGVNFSDELARAVIMLGLPYPNAFSGELIAKRKFIEETTLSKGGTQAMAKKNSREYYENICMRAVNQSVGRSIRHANDYSVIVLFDTRYNSSHIQSKLSGWMRSSIRPERESFDMTLERIADFFAAKTLTKR</sequence>
<reference key="1">
    <citation type="journal article" date="2009" name="Nature">
        <title>Evolution of pathogenicity and sexual reproduction in eight Candida genomes.</title>
        <authorList>
            <person name="Butler G."/>
            <person name="Rasmussen M.D."/>
            <person name="Lin M.F."/>
            <person name="Santos M.A.S."/>
            <person name="Sakthikumar S."/>
            <person name="Munro C.A."/>
            <person name="Rheinbay E."/>
            <person name="Grabherr M."/>
            <person name="Forche A."/>
            <person name="Reedy J.L."/>
            <person name="Agrafioti I."/>
            <person name="Arnaud M.B."/>
            <person name="Bates S."/>
            <person name="Brown A.J.P."/>
            <person name="Brunke S."/>
            <person name="Costanzo M.C."/>
            <person name="Fitzpatrick D.A."/>
            <person name="de Groot P.W.J."/>
            <person name="Harris D."/>
            <person name="Hoyer L.L."/>
            <person name="Hube B."/>
            <person name="Klis F.M."/>
            <person name="Kodira C."/>
            <person name="Lennard N."/>
            <person name="Logue M.E."/>
            <person name="Martin R."/>
            <person name="Neiman A.M."/>
            <person name="Nikolaou E."/>
            <person name="Quail M.A."/>
            <person name="Quinn J."/>
            <person name="Santos M.C."/>
            <person name="Schmitzberger F.F."/>
            <person name="Sherlock G."/>
            <person name="Shah P."/>
            <person name="Silverstein K.A.T."/>
            <person name="Skrzypek M.S."/>
            <person name="Soll D."/>
            <person name="Staggs R."/>
            <person name="Stansfield I."/>
            <person name="Stumpf M.P.H."/>
            <person name="Sudbery P.E."/>
            <person name="Srikantha T."/>
            <person name="Zeng Q."/>
            <person name="Berman J."/>
            <person name="Berriman M."/>
            <person name="Heitman J."/>
            <person name="Gow N.A.R."/>
            <person name="Lorenz M.C."/>
            <person name="Birren B.W."/>
            <person name="Kellis M."/>
            <person name="Cuomo C.A."/>
        </authorList>
    </citation>
    <scope>NUCLEOTIDE SEQUENCE [LARGE SCALE GENOMIC DNA]</scope>
    <source>
        <strain>ATCC 6260 / CBS 566 / DSM 6381 / JCM 1539 / NBRC 10279 / NRRL Y-324</strain>
    </source>
</reference>
<name>CHL1_PICGU</name>
<dbReference type="EC" id="5.6.2.3" evidence="3"/>
<dbReference type="EMBL" id="CH408160">
    <property type="protein sequence ID" value="EDK40869.2"/>
    <property type="molecule type" value="Genomic_DNA"/>
</dbReference>
<dbReference type="RefSeq" id="XP_001483012.1">
    <property type="nucleotide sequence ID" value="XM_001482962.1"/>
</dbReference>
<dbReference type="SMR" id="A5DNW6"/>
<dbReference type="FunCoup" id="A5DNW6">
    <property type="interactions" value="970"/>
</dbReference>
<dbReference type="STRING" id="294746.A5DNW6"/>
<dbReference type="GeneID" id="5124774"/>
<dbReference type="KEGG" id="pgu:PGUG_04967"/>
<dbReference type="VEuPathDB" id="FungiDB:PGUG_04967"/>
<dbReference type="eggNOG" id="KOG1133">
    <property type="taxonomic scope" value="Eukaryota"/>
</dbReference>
<dbReference type="HOGENOM" id="CLU_006515_2_0_1"/>
<dbReference type="InParanoid" id="A5DNW6"/>
<dbReference type="OMA" id="QTHQFRD"/>
<dbReference type="OrthoDB" id="267079at2759"/>
<dbReference type="Proteomes" id="UP000001997">
    <property type="component" value="Unassembled WGS sequence"/>
</dbReference>
<dbReference type="GO" id="GO:0000785">
    <property type="term" value="C:chromatin"/>
    <property type="evidence" value="ECO:0007669"/>
    <property type="project" value="EnsemblFungi"/>
</dbReference>
<dbReference type="GO" id="GO:0005634">
    <property type="term" value="C:nucleus"/>
    <property type="evidence" value="ECO:0007669"/>
    <property type="project" value="UniProtKB-SubCell"/>
</dbReference>
<dbReference type="GO" id="GO:0005524">
    <property type="term" value="F:ATP binding"/>
    <property type="evidence" value="ECO:0007669"/>
    <property type="project" value="UniProtKB-KW"/>
</dbReference>
<dbReference type="GO" id="GO:0016887">
    <property type="term" value="F:ATP hydrolysis activity"/>
    <property type="evidence" value="ECO:0007669"/>
    <property type="project" value="RHEA"/>
</dbReference>
<dbReference type="GO" id="GO:0003677">
    <property type="term" value="F:DNA binding"/>
    <property type="evidence" value="ECO:0007669"/>
    <property type="project" value="UniProtKB-KW"/>
</dbReference>
<dbReference type="GO" id="GO:0003678">
    <property type="term" value="F:DNA helicase activity"/>
    <property type="evidence" value="ECO:0007669"/>
    <property type="project" value="EnsemblFungi"/>
</dbReference>
<dbReference type="GO" id="GO:0051536">
    <property type="term" value="F:iron-sulfur cluster binding"/>
    <property type="evidence" value="ECO:0007669"/>
    <property type="project" value="UniProtKB-KW"/>
</dbReference>
<dbReference type="GO" id="GO:0046872">
    <property type="term" value="F:metal ion binding"/>
    <property type="evidence" value="ECO:0007669"/>
    <property type="project" value="UniProtKB-KW"/>
</dbReference>
<dbReference type="GO" id="GO:0034085">
    <property type="term" value="P:establishment of sister chromatid cohesion"/>
    <property type="evidence" value="ECO:0007669"/>
    <property type="project" value="EnsemblFungi"/>
</dbReference>
<dbReference type="GO" id="GO:0036297">
    <property type="term" value="P:interstrand cross-link repair"/>
    <property type="evidence" value="ECO:0007669"/>
    <property type="project" value="EnsemblFungi"/>
</dbReference>
<dbReference type="GO" id="GO:0031571">
    <property type="term" value="P:mitotic G1 DNA damage checkpoint signaling"/>
    <property type="evidence" value="ECO:0007669"/>
    <property type="project" value="EnsemblFungi"/>
</dbReference>
<dbReference type="GO" id="GO:0007064">
    <property type="term" value="P:mitotic sister chromatid cohesion"/>
    <property type="evidence" value="ECO:0007669"/>
    <property type="project" value="EnsemblFungi"/>
</dbReference>
<dbReference type="CDD" id="cd18788">
    <property type="entry name" value="SF2_C_XPD"/>
    <property type="match status" value="1"/>
</dbReference>
<dbReference type="FunFam" id="3.40.50.300:FF:001372">
    <property type="entry name" value="ATP-dependent DNA helicase chl1"/>
    <property type="match status" value="1"/>
</dbReference>
<dbReference type="Gene3D" id="3.40.50.300">
    <property type="entry name" value="P-loop containing nucleotide triphosphate hydrolases"/>
    <property type="match status" value="3"/>
</dbReference>
<dbReference type="InterPro" id="IPR006555">
    <property type="entry name" value="ATP-dep_Helicase_C"/>
</dbReference>
<dbReference type="InterPro" id="IPR045028">
    <property type="entry name" value="DinG/Rad3-like"/>
</dbReference>
<dbReference type="InterPro" id="IPR002464">
    <property type="entry name" value="DNA/RNA_helicase_DEAH_CS"/>
</dbReference>
<dbReference type="InterPro" id="IPR014013">
    <property type="entry name" value="Helic_SF1/SF2_ATP-bd_DinG/Rad3"/>
</dbReference>
<dbReference type="InterPro" id="IPR006554">
    <property type="entry name" value="Helicase-like_DEXD_c2"/>
</dbReference>
<dbReference type="InterPro" id="IPR027417">
    <property type="entry name" value="P-loop_NTPase"/>
</dbReference>
<dbReference type="InterPro" id="IPR010614">
    <property type="entry name" value="RAD3-like_helicase_DEAD"/>
</dbReference>
<dbReference type="InterPro" id="IPR013020">
    <property type="entry name" value="Rad3/Chl1-like"/>
</dbReference>
<dbReference type="NCBIfam" id="TIGR00604">
    <property type="entry name" value="rad3"/>
    <property type="match status" value="1"/>
</dbReference>
<dbReference type="PANTHER" id="PTHR11472:SF41">
    <property type="entry name" value="ATP-DEPENDENT DNA HELICASE DDX11-RELATED"/>
    <property type="match status" value="1"/>
</dbReference>
<dbReference type="PANTHER" id="PTHR11472">
    <property type="entry name" value="DNA REPAIR DEAD HELICASE RAD3/XP-D SUBFAMILY MEMBER"/>
    <property type="match status" value="1"/>
</dbReference>
<dbReference type="Pfam" id="PF06733">
    <property type="entry name" value="DEAD_2"/>
    <property type="match status" value="1"/>
</dbReference>
<dbReference type="Pfam" id="PF13307">
    <property type="entry name" value="Helicase_C_2"/>
    <property type="match status" value="1"/>
</dbReference>
<dbReference type="SMART" id="SM00488">
    <property type="entry name" value="DEXDc2"/>
    <property type="match status" value="1"/>
</dbReference>
<dbReference type="SMART" id="SM00491">
    <property type="entry name" value="HELICc2"/>
    <property type="match status" value="1"/>
</dbReference>
<dbReference type="SUPFAM" id="SSF52540">
    <property type="entry name" value="P-loop containing nucleoside triphosphate hydrolases"/>
    <property type="match status" value="2"/>
</dbReference>
<dbReference type="PROSITE" id="PS00690">
    <property type="entry name" value="DEAH_ATP_HELICASE"/>
    <property type="match status" value="1"/>
</dbReference>
<dbReference type="PROSITE" id="PS51193">
    <property type="entry name" value="HELICASE_ATP_BIND_2"/>
    <property type="match status" value="1"/>
</dbReference>
<keyword id="KW-0067">ATP-binding</keyword>
<keyword id="KW-0131">Cell cycle</keyword>
<keyword id="KW-0238">DNA-binding</keyword>
<keyword id="KW-0347">Helicase</keyword>
<keyword id="KW-0378">Hydrolase</keyword>
<keyword id="KW-0408">Iron</keyword>
<keyword id="KW-0411">Iron-sulfur</keyword>
<keyword id="KW-0413">Isomerase</keyword>
<keyword id="KW-0479">Metal-binding</keyword>
<keyword id="KW-0547">Nucleotide-binding</keyword>
<keyword id="KW-0539">Nucleus</keyword>
<keyword id="KW-1185">Reference proteome</keyword>
<gene>
    <name type="primary">CHL1</name>
    <name type="ORF">PGUG_04967</name>
</gene>
<comment type="function">
    <text evidence="2">ATP-dependent DNA helicase important for chromosome transmission and normal cell cycle progression in G(2)/M (By similarity). May have a role in changing DNA topology to allow the loading of proteins involved in maintaining sister chromatid cohesion in the vicinity of the centromeres (By similarity). Has a specific role in chromosome segregation during meiosis II (By similarity).</text>
</comment>
<comment type="catalytic activity">
    <reaction evidence="3">
        <text>Couples ATP hydrolysis with the unwinding of duplex DNA at the replication fork by translocating in the 5'-3' direction. This creates two antiparallel DNA single strands (ssDNA). The leading ssDNA polymer is the template for DNA polymerase III holoenzyme which synthesizes a continuous strand.</text>
        <dbReference type="EC" id="5.6.2.3"/>
    </reaction>
</comment>
<comment type="catalytic activity">
    <reaction evidence="3">
        <text>ATP + H2O = ADP + phosphate + H(+)</text>
        <dbReference type="Rhea" id="RHEA:13065"/>
        <dbReference type="ChEBI" id="CHEBI:15377"/>
        <dbReference type="ChEBI" id="CHEBI:15378"/>
        <dbReference type="ChEBI" id="CHEBI:30616"/>
        <dbReference type="ChEBI" id="CHEBI:43474"/>
        <dbReference type="ChEBI" id="CHEBI:456216"/>
        <dbReference type="EC" id="5.6.2.3"/>
    </reaction>
</comment>
<comment type="cofactor">
    <cofactor evidence="1">
        <name>[4Fe-4S] cluster</name>
        <dbReference type="ChEBI" id="CHEBI:49883"/>
    </cofactor>
    <text evidence="1">Binds 1 [4Fe-4S] cluster.</text>
</comment>
<comment type="subcellular location">
    <subcellularLocation>
        <location evidence="2">Nucleus</location>
    </subcellularLocation>
</comment>
<comment type="similarity">
    <text evidence="6">Belongs to the DEAD box helicase family. DEAH subfamily. DDX11/CHL1 sub-subfamily.</text>
</comment>
<protein>
    <recommendedName>
        <fullName evidence="2">ATP-dependent DNA helicase CHL1</fullName>
        <ecNumber evidence="3">5.6.2.3</ecNumber>
    </recommendedName>
    <alternativeName>
        <fullName evidence="2">Chromosome loss protein 1</fullName>
    </alternativeName>
    <alternativeName>
        <fullName evidence="6">DNA 5'-3' helicase CHL1</fullName>
    </alternativeName>
</protein>
<accession>A5DNW6</accession>